<protein>
    <recommendedName>
        <fullName>GDP-mannose 3,5-epimerase 1</fullName>
        <shortName>GDP-Man 3,5-epimerase 1</shortName>
        <ecNumber evidence="2">5.1.3.18</ecNumber>
    </recommendedName>
    <alternativeName>
        <fullName>OsGME-1</fullName>
    </alternativeName>
</protein>
<proteinExistence type="evidence at transcript level"/>
<comment type="function">
    <text evidence="2">Catalyzes a reversible epimerization of GDP-D-mannose that precedes the committed step in the biosynthesis of vitamin C (L-ascorbate), resulting in the hydrolysis of the highly energetic glycosyl-pyrophosphoryl linkage. Able to catalyze 2 distinct epimerization reactions and can release both GDP-L-galactose and GDP-L-gulose from GDP-mannose.</text>
</comment>
<comment type="catalytic activity">
    <reaction evidence="2">
        <text>GDP-alpha-D-mannose = GDP-beta-L-gulose</text>
        <dbReference type="Rhea" id="RHEA:63800"/>
        <dbReference type="ChEBI" id="CHEBI:57527"/>
        <dbReference type="ChEBI" id="CHEBI:149550"/>
        <dbReference type="EC" id="5.1.3.18"/>
    </reaction>
</comment>
<comment type="catalytic activity">
    <reaction evidence="2">
        <text>GDP-beta-L-gulose = GDP-beta-L-galactose</text>
        <dbReference type="Rhea" id="RHEA:63804"/>
        <dbReference type="ChEBI" id="CHEBI:61454"/>
        <dbReference type="ChEBI" id="CHEBI:149550"/>
        <dbReference type="EC" id="5.1.3.18"/>
    </reaction>
</comment>
<comment type="cofactor">
    <cofactor evidence="2">
        <name>NAD(+)</name>
        <dbReference type="ChEBI" id="CHEBI:57540"/>
    </cofactor>
</comment>
<comment type="pathway">
    <text evidence="3">Cofactor biosynthesis; L-ascorbate biosynthesis via GDP-alpha-D-mannose pathway; L-ascorbate from GDP-alpha-D-mannose: step 1/5.</text>
</comment>
<comment type="subunit">
    <text evidence="1">Homodimer.</text>
</comment>
<comment type="similarity">
    <text evidence="4">Belongs to the NAD(P)-dependent epimerase/dehydratase family.</text>
</comment>
<gene>
    <name type="ORF">OsI_032456</name>
</gene>
<evidence type="ECO:0000250" key="1"/>
<evidence type="ECO:0000250" key="2">
    <source>
        <dbReference type="UniProtKB" id="Q93VR3"/>
    </source>
</evidence>
<evidence type="ECO:0000269" key="3">
    <source>
    </source>
</evidence>
<evidence type="ECO:0000305" key="4"/>
<dbReference type="EC" id="5.1.3.18" evidence="2"/>
<dbReference type="EMBL" id="DQ119303">
    <property type="protein sequence ID" value="ABA18619.1"/>
    <property type="molecule type" value="mRNA"/>
</dbReference>
<dbReference type="EMBL" id="CM000135">
    <property type="protein sequence ID" value="EAY78497.1"/>
    <property type="molecule type" value="Genomic_DNA"/>
</dbReference>
<dbReference type="SMR" id="A2Z7B3"/>
<dbReference type="STRING" id="39946.A2Z7B3"/>
<dbReference type="EnsemblPlants" id="BGIOSGA032923-TA">
    <property type="protein sequence ID" value="BGIOSGA032923-PA"/>
    <property type="gene ID" value="BGIOSGA032923"/>
</dbReference>
<dbReference type="EnsemblPlants" id="OsIR64_10g0010970.01">
    <property type="protein sequence ID" value="OsIR64_10g0010970.01"/>
    <property type="gene ID" value="OsIR64_10g0010970"/>
</dbReference>
<dbReference type="EnsemblPlants" id="OsLima_10g0010770.01">
    <property type="protein sequence ID" value="OsLima_10g0010770.01"/>
    <property type="gene ID" value="OsLima_10g0010770"/>
</dbReference>
<dbReference type="EnsemblPlants" id="OsLiXu_Ung0061060.01">
    <property type="protein sequence ID" value="OsLiXu_Ung0061060.01"/>
    <property type="gene ID" value="OsLiXu_Ung0061060"/>
</dbReference>
<dbReference type="EnsemblPlants" id="OsMH63_10G010810_01">
    <property type="protein sequence ID" value="OsMH63_10G010810_01"/>
    <property type="gene ID" value="OsMH63_10G010810"/>
</dbReference>
<dbReference type="Gramene" id="BGIOSGA032923-TA">
    <property type="protein sequence ID" value="BGIOSGA032923-PA"/>
    <property type="gene ID" value="BGIOSGA032923"/>
</dbReference>
<dbReference type="Gramene" id="OsIR64_10g0010970.01">
    <property type="protein sequence ID" value="OsIR64_10g0010970.01"/>
    <property type="gene ID" value="OsIR64_10g0010970"/>
</dbReference>
<dbReference type="Gramene" id="OsLima_10g0010770.01">
    <property type="protein sequence ID" value="OsLima_10g0010770.01"/>
    <property type="gene ID" value="OsLima_10g0010770"/>
</dbReference>
<dbReference type="Gramene" id="OsLiXu_Ung0061060.01">
    <property type="protein sequence ID" value="OsLiXu_Ung0061060.01"/>
    <property type="gene ID" value="OsLiXu_Ung0061060"/>
</dbReference>
<dbReference type="Gramene" id="OsMH63_10G010810_01">
    <property type="protein sequence ID" value="OsMH63_10G010810_01"/>
    <property type="gene ID" value="OsMH63_10G010810"/>
</dbReference>
<dbReference type="HOGENOM" id="CLU_007383_4_2_1"/>
<dbReference type="OMA" id="ASAGCKW"/>
<dbReference type="UniPathway" id="UPA00990">
    <property type="reaction ID" value="UER00931"/>
</dbReference>
<dbReference type="Proteomes" id="UP000007015">
    <property type="component" value="Chromosome 10"/>
</dbReference>
<dbReference type="GO" id="GO:0047918">
    <property type="term" value="F:GDP-mannose 3,5-epimerase activity"/>
    <property type="evidence" value="ECO:0007669"/>
    <property type="project" value="UniProtKB-EC"/>
</dbReference>
<dbReference type="GO" id="GO:0051287">
    <property type="term" value="F:NAD binding"/>
    <property type="evidence" value="ECO:0007669"/>
    <property type="project" value="InterPro"/>
</dbReference>
<dbReference type="GO" id="GO:0019853">
    <property type="term" value="P:L-ascorbic acid biosynthetic process"/>
    <property type="evidence" value="ECO:0007669"/>
    <property type="project" value="UniProtKB-KW"/>
</dbReference>
<dbReference type="CDD" id="cd05273">
    <property type="entry name" value="GME-like_SDR_e"/>
    <property type="match status" value="1"/>
</dbReference>
<dbReference type="Gene3D" id="3.40.50.720">
    <property type="entry name" value="NAD(P)-binding Rossmann-like Domain"/>
    <property type="match status" value="1"/>
</dbReference>
<dbReference type="Gene3D" id="3.90.25.10">
    <property type="entry name" value="UDP-galactose 4-epimerase, domain 1"/>
    <property type="match status" value="1"/>
</dbReference>
<dbReference type="InterPro" id="IPR001509">
    <property type="entry name" value="Epimerase_deHydtase"/>
</dbReference>
<dbReference type="InterPro" id="IPR033890">
    <property type="entry name" value="GDP-Man_epi"/>
</dbReference>
<dbReference type="InterPro" id="IPR036291">
    <property type="entry name" value="NAD(P)-bd_dom_sf"/>
</dbReference>
<dbReference type="PANTHER" id="PTHR43574">
    <property type="entry name" value="EPIMERASE-RELATED"/>
    <property type="match status" value="1"/>
</dbReference>
<dbReference type="Pfam" id="PF01370">
    <property type="entry name" value="Epimerase"/>
    <property type="match status" value="1"/>
</dbReference>
<dbReference type="SUPFAM" id="SSF51735">
    <property type="entry name" value="NAD(P)-binding Rossmann-fold domains"/>
    <property type="match status" value="1"/>
</dbReference>
<accession>A2Z7B3</accession>
<accession>Q0IXP2</accession>
<accession>Q0R4F5</accession>
<accession>Q109P5</accession>
<accession>Q338B5</accession>
<accession>Q5W7P1</accession>
<accession>Q8S862</accession>
<feature type="chain" id="PRO_0000295026" description="GDP-mannose 3,5-epimerase 1">
    <location>
        <begin position="1"/>
        <end position="378"/>
    </location>
</feature>
<feature type="active site" description="Proton acceptor" evidence="1">
    <location>
        <position position="175"/>
    </location>
</feature>
<feature type="binding site" evidence="1">
    <location>
        <begin position="36"/>
        <end position="62"/>
    </location>
    <ligand>
        <name>NAD(+)</name>
        <dbReference type="ChEBI" id="CHEBI:57540"/>
    </ligand>
</feature>
<feature type="binding site" evidence="1">
    <location>
        <position position="60"/>
    </location>
    <ligand>
        <name>NAD(+)</name>
        <dbReference type="ChEBI" id="CHEBI:57540"/>
    </ligand>
</feature>
<feature type="binding site" evidence="1">
    <location>
        <position position="80"/>
    </location>
    <ligand>
        <name>NAD(+)</name>
        <dbReference type="ChEBI" id="CHEBI:57540"/>
    </ligand>
</feature>
<feature type="binding site" evidence="1">
    <location>
        <position position="105"/>
    </location>
    <ligand>
        <name>substrate</name>
    </ligand>
</feature>
<feature type="binding site" evidence="1">
    <location>
        <begin position="145"/>
        <end position="147"/>
    </location>
    <ligand>
        <name>substrate</name>
    </ligand>
</feature>
<feature type="binding site" evidence="1">
    <location>
        <position position="175"/>
    </location>
    <ligand>
        <name>NAD(+)</name>
        <dbReference type="ChEBI" id="CHEBI:57540"/>
    </ligand>
</feature>
<feature type="binding site" evidence="1">
    <location>
        <position position="179"/>
    </location>
    <ligand>
        <name>NAD(+)</name>
        <dbReference type="ChEBI" id="CHEBI:57540"/>
    </ligand>
</feature>
<feature type="binding site" evidence="1">
    <location>
        <position position="204"/>
    </location>
    <ligand>
        <name>substrate</name>
    </ligand>
</feature>
<feature type="binding site" evidence="1">
    <location>
        <begin position="217"/>
        <end position="219"/>
    </location>
    <ligand>
        <name>substrate</name>
    </ligand>
</feature>
<feature type="binding site" evidence="1">
    <location>
        <position position="226"/>
    </location>
    <ligand>
        <name>substrate</name>
    </ligand>
</feature>
<feature type="binding site" evidence="1">
    <location>
        <begin position="242"/>
        <end position="244"/>
    </location>
    <ligand>
        <name>substrate</name>
    </ligand>
</feature>
<feature type="binding site" evidence="1">
    <location>
        <position position="307"/>
    </location>
    <ligand>
        <name>substrate</name>
    </ligand>
</feature>
<feature type="binding site" evidence="1">
    <location>
        <position position="357"/>
    </location>
    <ligand>
        <name>substrate</name>
    </ligand>
</feature>
<feature type="sequence conflict" description="In Ref. 1; ABA18619." evidence="4" ref="1">
    <original>S</original>
    <variation>G</variation>
    <location>
        <position position="93"/>
    </location>
</feature>
<reference key="1">
    <citation type="submission" date="2005-07" db="EMBL/GenBank/DDBJ databases">
        <title>An epimerase/dehydratase gene from rice panicle shorter than 3cm.</title>
        <authorList>
            <person name="Wang F."/>
            <person name="Wang H."/>
            <person name="Wang J."/>
        </authorList>
    </citation>
    <scope>NUCLEOTIDE SEQUENCE [MRNA]</scope>
    <source>
        <tissue>Panicle</tissue>
    </source>
</reference>
<reference key="2">
    <citation type="journal article" date="2005" name="PLoS Biol.">
        <title>The genomes of Oryza sativa: a history of duplications.</title>
        <authorList>
            <person name="Yu J."/>
            <person name="Wang J."/>
            <person name="Lin W."/>
            <person name="Li S."/>
            <person name="Li H."/>
            <person name="Zhou J."/>
            <person name="Ni P."/>
            <person name="Dong W."/>
            <person name="Hu S."/>
            <person name="Zeng C."/>
            <person name="Zhang J."/>
            <person name="Zhang Y."/>
            <person name="Li R."/>
            <person name="Xu Z."/>
            <person name="Li S."/>
            <person name="Li X."/>
            <person name="Zheng H."/>
            <person name="Cong L."/>
            <person name="Lin L."/>
            <person name="Yin J."/>
            <person name="Geng J."/>
            <person name="Li G."/>
            <person name="Shi J."/>
            <person name="Liu J."/>
            <person name="Lv H."/>
            <person name="Li J."/>
            <person name="Wang J."/>
            <person name="Deng Y."/>
            <person name="Ran L."/>
            <person name="Shi X."/>
            <person name="Wang X."/>
            <person name="Wu Q."/>
            <person name="Li C."/>
            <person name="Ren X."/>
            <person name="Wang J."/>
            <person name="Wang X."/>
            <person name="Li D."/>
            <person name="Liu D."/>
            <person name="Zhang X."/>
            <person name="Ji Z."/>
            <person name="Zhao W."/>
            <person name="Sun Y."/>
            <person name="Zhang Z."/>
            <person name="Bao J."/>
            <person name="Han Y."/>
            <person name="Dong L."/>
            <person name="Ji J."/>
            <person name="Chen P."/>
            <person name="Wu S."/>
            <person name="Liu J."/>
            <person name="Xiao Y."/>
            <person name="Bu D."/>
            <person name="Tan J."/>
            <person name="Yang L."/>
            <person name="Ye C."/>
            <person name="Zhang J."/>
            <person name="Xu J."/>
            <person name="Zhou Y."/>
            <person name="Yu Y."/>
            <person name="Zhang B."/>
            <person name="Zhuang S."/>
            <person name="Wei H."/>
            <person name="Liu B."/>
            <person name="Lei M."/>
            <person name="Yu H."/>
            <person name="Li Y."/>
            <person name="Xu H."/>
            <person name="Wei S."/>
            <person name="He X."/>
            <person name="Fang L."/>
            <person name="Zhang Z."/>
            <person name="Zhang Y."/>
            <person name="Huang X."/>
            <person name="Su Z."/>
            <person name="Tong W."/>
            <person name="Li J."/>
            <person name="Tong Z."/>
            <person name="Li S."/>
            <person name="Ye J."/>
            <person name="Wang L."/>
            <person name="Fang L."/>
            <person name="Lei T."/>
            <person name="Chen C.-S."/>
            <person name="Chen H.-C."/>
            <person name="Xu Z."/>
            <person name="Li H."/>
            <person name="Huang H."/>
            <person name="Zhang F."/>
            <person name="Xu H."/>
            <person name="Li N."/>
            <person name="Zhao C."/>
            <person name="Li S."/>
            <person name="Dong L."/>
            <person name="Huang Y."/>
            <person name="Li L."/>
            <person name="Xi Y."/>
            <person name="Qi Q."/>
            <person name="Li W."/>
            <person name="Zhang B."/>
            <person name="Hu W."/>
            <person name="Zhang Y."/>
            <person name="Tian X."/>
            <person name="Jiao Y."/>
            <person name="Liang X."/>
            <person name="Jin J."/>
            <person name="Gao L."/>
            <person name="Zheng W."/>
            <person name="Hao B."/>
            <person name="Liu S.-M."/>
            <person name="Wang W."/>
            <person name="Yuan L."/>
            <person name="Cao M."/>
            <person name="McDermott J."/>
            <person name="Samudrala R."/>
            <person name="Wang J."/>
            <person name="Wong G.K.-S."/>
            <person name="Yang H."/>
        </authorList>
    </citation>
    <scope>NUCLEOTIDE SEQUENCE [LARGE SCALE GENOMIC DNA]</scope>
    <source>
        <strain>cv. 93-11</strain>
    </source>
</reference>
<reference key="3">
    <citation type="journal article" date="1998" name="Nature">
        <title>The biosynthetic pathway of vitamin C in higher plants.</title>
        <authorList>
            <person name="Wheeler G.L."/>
            <person name="Jones M.A."/>
            <person name="Smirnoff N."/>
        </authorList>
    </citation>
    <scope>PATHWAY</scope>
</reference>
<organism>
    <name type="scientific">Oryza sativa subsp. indica</name>
    <name type="common">Rice</name>
    <dbReference type="NCBI Taxonomy" id="39946"/>
    <lineage>
        <taxon>Eukaryota</taxon>
        <taxon>Viridiplantae</taxon>
        <taxon>Streptophyta</taxon>
        <taxon>Embryophyta</taxon>
        <taxon>Tracheophyta</taxon>
        <taxon>Spermatophyta</taxon>
        <taxon>Magnoliopsida</taxon>
        <taxon>Liliopsida</taxon>
        <taxon>Poales</taxon>
        <taxon>Poaceae</taxon>
        <taxon>BOP clade</taxon>
        <taxon>Oryzoideae</taxon>
        <taxon>Oryzeae</taxon>
        <taxon>Oryzinae</taxon>
        <taxon>Oryza</taxon>
        <taxon>Oryza sativa</taxon>
    </lineage>
</organism>
<sequence>MGSSEKNGTAYGEYTYAELEREQYWPSEKLRISITGAGGFIGSHIARRLKSEGHYIIASDWKKNEHMTEDMFCHEFHLVDLRVMDNCLKVTNSVDHVFNLAADMGGMGFIQSNHSVIMYNNTMISFNMLEAARINGVKRFFYASSACIYPEFKQLETNVSLKESDAWPAEPQDAYGLEKLATEELCKHYTKDFGIECRVGRFHNIYGPFGTWKGGREKAPAAFCRKAQTSTDRFEMWGDGLQTRSFTFIDECVEGVLRLTKSDFREPVNIGSDEMVSMNEMAEIILSFEDRELPIHHIPGPEGVRGRNSDNTLIKEKLGWAPTMKLKDGLRFTYFWIKEQIEKEKTQGVDIAGYGSSKVVSTQAPVQLGSLRAADGKE</sequence>
<name>GME1_ORYSI</name>
<keyword id="KW-0060">Ascorbate biosynthesis</keyword>
<keyword id="KW-0413">Isomerase</keyword>
<keyword id="KW-0520">NAD</keyword>
<keyword id="KW-1185">Reference proteome</keyword>